<name>AMZA_PYRAB</name>
<gene>
    <name evidence="1" type="primary">amzA</name>
    <name type="ordered locus">PYRAB03760</name>
    <name type="ORF">PAB2097</name>
</gene>
<keyword id="KW-0378">Hydrolase</keyword>
<keyword id="KW-0479">Metal-binding</keyword>
<keyword id="KW-0482">Metalloprotease</keyword>
<keyword id="KW-0645">Protease</keyword>
<keyword id="KW-0862">Zinc</keyword>
<accession>Q9V1Q1</accession>
<accession>G8ZI10</accession>
<comment type="function">
    <text evidence="1">Probable zinc metalloprotease whose natural substrate is unknown.</text>
</comment>
<comment type="cofactor">
    <cofactor evidence="1">
        <name>Zn(2+)</name>
        <dbReference type="ChEBI" id="CHEBI:29105"/>
    </cofactor>
    <text evidence="1">Binds 2 Zn(2+) ions per subunit. One is catalytic, whereas the other seems to have a structural role.</text>
</comment>
<comment type="subunit">
    <text evidence="1">Monomer.</text>
</comment>
<comment type="similarity">
    <text evidence="1">Belongs to the peptidase M54 family.</text>
</comment>
<reference key="1">
    <citation type="journal article" date="2003" name="Mol. Microbiol.">
        <title>An integrated analysis of the genome of the hyperthermophilic archaeon Pyrococcus abyssi.</title>
        <authorList>
            <person name="Cohen G.N."/>
            <person name="Barbe V."/>
            <person name="Flament D."/>
            <person name="Galperin M."/>
            <person name="Heilig R."/>
            <person name="Lecompte O."/>
            <person name="Poch O."/>
            <person name="Prieur D."/>
            <person name="Querellou J."/>
            <person name="Ripp R."/>
            <person name="Thierry J.-C."/>
            <person name="Van der Oost J."/>
            <person name="Weissenbach J."/>
            <person name="Zivanovic Y."/>
            <person name="Forterre P."/>
        </authorList>
    </citation>
    <scope>NUCLEOTIDE SEQUENCE [LARGE SCALE GENOMIC DNA]</scope>
    <source>
        <strain>GE5 / Orsay</strain>
    </source>
</reference>
<reference key="2">
    <citation type="journal article" date="2012" name="Curr. Microbiol.">
        <title>Re-annotation of two hyperthermophilic archaea Pyrococcus abyssi GE5 and Pyrococcus furiosus DSM 3638.</title>
        <authorList>
            <person name="Gao J."/>
            <person name="Wang J."/>
        </authorList>
    </citation>
    <scope>GENOME REANNOTATION</scope>
    <source>
        <strain>GE5 / Orsay</strain>
    </source>
</reference>
<evidence type="ECO:0000255" key="1">
    <source>
        <dbReference type="HAMAP-Rule" id="MF_01842"/>
    </source>
</evidence>
<protein>
    <recommendedName>
        <fullName evidence="1">Archaemetzincin</fullName>
        <ecNumber evidence="1">3.4.-.-</ecNumber>
    </recommendedName>
</protein>
<dbReference type="EC" id="3.4.-.-" evidence="1"/>
<dbReference type="EMBL" id="AJ248284">
    <property type="protein sequence ID" value="CAB49298.1"/>
    <property type="molecule type" value="Genomic_DNA"/>
</dbReference>
<dbReference type="EMBL" id="HE613800">
    <property type="protein sequence ID" value="CCE69753.1"/>
    <property type="molecule type" value="Genomic_DNA"/>
</dbReference>
<dbReference type="PIR" id="C75152">
    <property type="entry name" value="C75152"/>
</dbReference>
<dbReference type="SMR" id="Q9V1Q1"/>
<dbReference type="STRING" id="272844.PAB2097"/>
<dbReference type="KEGG" id="pab:PAB2097"/>
<dbReference type="PATRIC" id="fig|272844.11.peg.396"/>
<dbReference type="eggNOG" id="arCOG00458">
    <property type="taxonomic scope" value="Archaea"/>
</dbReference>
<dbReference type="HOGENOM" id="CLU_108521_2_0_2"/>
<dbReference type="PhylomeDB" id="Q9V1Q1"/>
<dbReference type="Proteomes" id="UP000000810">
    <property type="component" value="Chromosome"/>
</dbReference>
<dbReference type="Proteomes" id="UP000009139">
    <property type="component" value="Chromosome"/>
</dbReference>
<dbReference type="GO" id="GO:0008237">
    <property type="term" value="F:metallopeptidase activity"/>
    <property type="evidence" value="ECO:0007669"/>
    <property type="project" value="UniProtKB-UniRule"/>
</dbReference>
<dbReference type="GO" id="GO:0008270">
    <property type="term" value="F:zinc ion binding"/>
    <property type="evidence" value="ECO:0007669"/>
    <property type="project" value="UniProtKB-UniRule"/>
</dbReference>
<dbReference type="GO" id="GO:0006508">
    <property type="term" value="P:proteolysis"/>
    <property type="evidence" value="ECO:0007669"/>
    <property type="project" value="UniProtKB-UniRule"/>
</dbReference>
<dbReference type="CDD" id="cd11375">
    <property type="entry name" value="Peptidase_M54"/>
    <property type="match status" value="1"/>
</dbReference>
<dbReference type="Gene3D" id="3.40.390.10">
    <property type="entry name" value="Collagenase (Catalytic Domain)"/>
    <property type="match status" value="1"/>
</dbReference>
<dbReference type="HAMAP" id="MF_01842">
    <property type="entry name" value="Archaemetzincin"/>
    <property type="match status" value="1"/>
</dbReference>
<dbReference type="InterPro" id="IPR024079">
    <property type="entry name" value="MetalloPept_cat_dom_sf"/>
</dbReference>
<dbReference type="InterPro" id="IPR012962">
    <property type="entry name" value="Pept_M54_archaemetzincn"/>
</dbReference>
<dbReference type="InterPro" id="IPR012091">
    <property type="entry name" value="Pept_M54_archaemetzncn_arc/bac"/>
</dbReference>
<dbReference type="NCBIfam" id="NF033823">
    <property type="entry name" value="archmetzin"/>
    <property type="match status" value="1"/>
</dbReference>
<dbReference type="PANTHER" id="PTHR15910">
    <property type="entry name" value="ARCHAEMETZINCIN"/>
    <property type="match status" value="1"/>
</dbReference>
<dbReference type="PANTHER" id="PTHR15910:SF1">
    <property type="entry name" value="ARCHAEMETZINCIN-2"/>
    <property type="match status" value="1"/>
</dbReference>
<dbReference type="Pfam" id="PF07998">
    <property type="entry name" value="Peptidase_M54"/>
    <property type="match status" value="1"/>
</dbReference>
<dbReference type="PIRSF" id="PIRSF005785">
    <property type="entry name" value="Zn-prot_arch"/>
    <property type="match status" value="1"/>
</dbReference>
<dbReference type="SUPFAM" id="SSF55486">
    <property type="entry name" value="Metalloproteases ('zincins'), catalytic domain"/>
    <property type="match status" value="1"/>
</dbReference>
<organism>
    <name type="scientific">Pyrococcus abyssi (strain GE5 / Orsay)</name>
    <dbReference type="NCBI Taxonomy" id="272844"/>
    <lineage>
        <taxon>Archaea</taxon>
        <taxon>Methanobacteriati</taxon>
        <taxon>Methanobacteriota</taxon>
        <taxon>Thermococci</taxon>
        <taxon>Thermococcales</taxon>
        <taxon>Thermococcaceae</taxon>
        <taxon>Pyrococcus</taxon>
    </lineage>
</organism>
<sequence length="188" mass="21554">MMGMIIIVPIGEVPGDVLAFLQNSLSGFYAKYGIEVRLVGGLSLSKFQHAFDFERRQFLARYFLPVLSYIRKDFNAKAALGVVNVDIYELGLNFIFGLAHPGLRVAIISLYRLYPEFYGNPPDRKLLKERALKEAMHELGHVFGLEHCPNPKCVMHFSNSIIDTDIKSWMYCEKCLRKLEKNLTRSYV</sequence>
<feature type="chain" id="PRO_0000159630" description="Archaemetzincin">
    <location>
        <begin position="1"/>
        <end position="188"/>
    </location>
</feature>
<feature type="active site" description="Proton acceptor" evidence="1">
    <location>
        <position position="138"/>
    </location>
</feature>
<feature type="binding site" evidence="1">
    <location>
        <position position="137"/>
    </location>
    <ligand>
        <name>Zn(2+)</name>
        <dbReference type="ChEBI" id="CHEBI:29105"/>
        <label>1</label>
        <note>catalytic</note>
    </ligand>
</feature>
<feature type="binding site" evidence="1">
    <location>
        <position position="141"/>
    </location>
    <ligand>
        <name>Zn(2+)</name>
        <dbReference type="ChEBI" id="CHEBI:29105"/>
        <label>1</label>
        <note>catalytic</note>
    </ligand>
</feature>
<feature type="binding site" evidence="1">
    <location>
        <position position="147"/>
    </location>
    <ligand>
        <name>Zn(2+)</name>
        <dbReference type="ChEBI" id="CHEBI:29105"/>
        <label>1</label>
        <note>catalytic</note>
    </ligand>
</feature>
<feature type="binding site" evidence="1">
    <location>
        <position position="148"/>
    </location>
    <ligand>
        <name>Zn(2+)</name>
        <dbReference type="ChEBI" id="CHEBI:29105"/>
        <label>2</label>
    </ligand>
</feature>
<feature type="binding site" evidence="1">
    <location>
        <position position="153"/>
    </location>
    <ligand>
        <name>Zn(2+)</name>
        <dbReference type="ChEBI" id="CHEBI:29105"/>
        <label>2</label>
    </ligand>
</feature>
<feature type="binding site" evidence="1">
    <location>
        <position position="172"/>
    </location>
    <ligand>
        <name>Zn(2+)</name>
        <dbReference type="ChEBI" id="CHEBI:29105"/>
        <label>2</label>
    </ligand>
</feature>
<feature type="binding site" evidence="1">
    <location>
        <position position="175"/>
    </location>
    <ligand>
        <name>Zn(2+)</name>
        <dbReference type="ChEBI" id="CHEBI:29105"/>
        <label>2</label>
    </ligand>
</feature>
<proteinExistence type="inferred from homology"/>